<accession>P33488</accession>
<keyword id="KW-0927">Auxin signaling pathway</keyword>
<keyword id="KW-1015">Disulfide bond</keyword>
<keyword id="KW-0256">Endoplasmic reticulum</keyword>
<keyword id="KW-0325">Glycoprotein</keyword>
<keyword id="KW-0479">Metal-binding</keyword>
<keyword id="KW-0675">Receptor</keyword>
<keyword id="KW-1185">Reference proteome</keyword>
<keyword id="KW-0732">Signal</keyword>
<keyword id="KW-0862">Zinc</keyword>
<feature type="signal peptide" evidence="1">
    <location>
        <begin position="1"/>
        <end position="41"/>
    </location>
</feature>
<feature type="chain" id="PRO_0000020617" description="Auxin-binding protein 4">
    <location>
        <begin position="42"/>
        <end position="204"/>
    </location>
</feature>
<feature type="short sequence motif" description="Prevents secretion from ER" evidence="3">
    <location>
        <begin position="201"/>
        <end position="204"/>
    </location>
</feature>
<feature type="binding site" evidence="2">
    <location>
        <position position="98"/>
    </location>
    <ligand>
        <name>Zn(2+)</name>
        <dbReference type="ChEBI" id="CHEBI:29105"/>
    </ligand>
</feature>
<feature type="binding site" evidence="2">
    <location>
        <position position="100"/>
    </location>
    <ligand>
        <name>Zn(2+)</name>
        <dbReference type="ChEBI" id="CHEBI:29105"/>
    </ligand>
</feature>
<feature type="binding site" evidence="2">
    <location>
        <position position="104"/>
    </location>
    <ligand>
        <name>Zn(2+)</name>
        <dbReference type="ChEBI" id="CHEBI:29105"/>
    </ligand>
</feature>
<feature type="binding site" evidence="2">
    <location>
        <position position="147"/>
    </location>
    <ligand>
        <name>Zn(2+)</name>
        <dbReference type="ChEBI" id="CHEBI:29105"/>
    </ligand>
</feature>
<feature type="glycosylation site" description="N-linked (GlcNAc...) asparagine" evidence="2">
    <location>
        <position position="136"/>
    </location>
</feature>
<feature type="disulfide bond" evidence="2">
    <location>
        <begin position="43"/>
        <end position="196"/>
    </location>
</feature>
<comment type="function">
    <text>This is probably a receptor for the plant hormone auxin.</text>
</comment>
<comment type="subunit">
    <text evidence="1">Homodimer.</text>
</comment>
<comment type="subcellular location">
    <subcellularLocation>
        <location>Endoplasmic reticulum lumen</location>
    </subcellularLocation>
</comment>
<name>ABP4_MAIZE</name>
<protein>
    <recommendedName>
        <fullName>Auxin-binding protein 4</fullName>
        <shortName>ABP</shortName>
    </recommendedName>
</protein>
<evidence type="ECO:0000250" key="1"/>
<evidence type="ECO:0000250" key="2">
    <source>
        <dbReference type="UniProtKB" id="P13689"/>
    </source>
</evidence>
<evidence type="ECO:0000255" key="3"/>
<gene>
    <name type="primary">ABP4</name>
</gene>
<sequence>MVRRRPATGAAPRPHLAAVGRGLLLASVLAAAASSLPVAESSCPRDNSLVRDISRMQQRNYGREGFSHITVTGALAHGTKEVEVWLQTFGPGQRTPIHRHSCEEVFIVLKGKGTLLLGSSSLKYPGQPQEVPVFQNTTFSIPVNDPHQVWNSNEHEDLQVLVIISRPPVKIFIYDDWSMPHTAAKLKFPYFWDEDCLPAPKDEL</sequence>
<organism>
    <name type="scientific">Zea mays</name>
    <name type="common">Maize</name>
    <dbReference type="NCBI Taxonomy" id="4577"/>
    <lineage>
        <taxon>Eukaryota</taxon>
        <taxon>Viridiplantae</taxon>
        <taxon>Streptophyta</taxon>
        <taxon>Embryophyta</taxon>
        <taxon>Tracheophyta</taxon>
        <taxon>Spermatophyta</taxon>
        <taxon>Magnoliopsida</taxon>
        <taxon>Liliopsida</taxon>
        <taxon>Poales</taxon>
        <taxon>Poaceae</taxon>
        <taxon>PACMAD clade</taxon>
        <taxon>Panicoideae</taxon>
        <taxon>Andropogonodae</taxon>
        <taxon>Andropogoneae</taxon>
        <taxon>Tripsacinae</taxon>
        <taxon>Zea</taxon>
    </lineage>
</organism>
<dbReference type="EMBL" id="S66813">
    <property type="protein sequence ID" value="AAB28589.1"/>
    <property type="molecule type" value="mRNA"/>
</dbReference>
<dbReference type="EMBL" id="L08426">
    <property type="protein sequence ID" value="AAA33431.1"/>
    <property type="molecule type" value="Genomic_DNA"/>
</dbReference>
<dbReference type="PIR" id="B43033">
    <property type="entry name" value="B43033"/>
</dbReference>
<dbReference type="RefSeq" id="NP_001105353.1">
    <property type="nucleotide sequence ID" value="NM_001111883.1"/>
</dbReference>
<dbReference type="SMR" id="P33488"/>
<dbReference type="FunCoup" id="P33488">
    <property type="interactions" value="2419"/>
</dbReference>
<dbReference type="STRING" id="4577.P33488"/>
<dbReference type="GlyCosmos" id="P33488">
    <property type="glycosylation" value="1 site, No reported glycans"/>
</dbReference>
<dbReference type="PaxDb" id="4577-GRMZM2G064371_P02"/>
<dbReference type="EnsemblPlants" id="Zm00001eb410760_T001">
    <property type="protein sequence ID" value="Zm00001eb410760_P001"/>
    <property type="gene ID" value="Zm00001eb410760"/>
</dbReference>
<dbReference type="GeneID" id="542294"/>
<dbReference type="Gramene" id="Zm00001eb410760_T001">
    <property type="protein sequence ID" value="Zm00001eb410760_P001"/>
    <property type="gene ID" value="Zm00001eb410760"/>
</dbReference>
<dbReference type="KEGG" id="zma:542294"/>
<dbReference type="MaizeGDB" id="65341"/>
<dbReference type="eggNOG" id="ENOG502RXJU">
    <property type="taxonomic scope" value="Eukaryota"/>
</dbReference>
<dbReference type="InParanoid" id="P33488"/>
<dbReference type="OMA" id="VPINDPH"/>
<dbReference type="OrthoDB" id="2013851at2759"/>
<dbReference type="Proteomes" id="UP000007305">
    <property type="component" value="Chromosome 10"/>
</dbReference>
<dbReference type="ExpressionAtlas" id="P33488">
    <property type="expression patterns" value="baseline and differential"/>
</dbReference>
<dbReference type="GO" id="GO:0005788">
    <property type="term" value="C:endoplasmic reticulum lumen"/>
    <property type="evidence" value="ECO:0007669"/>
    <property type="project" value="UniProtKB-SubCell"/>
</dbReference>
<dbReference type="GO" id="GO:0010011">
    <property type="term" value="F:auxin binding"/>
    <property type="evidence" value="ECO:0000250"/>
    <property type="project" value="UniProtKB"/>
</dbReference>
<dbReference type="GO" id="GO:0008270">
    <property type="term" value="F:zinc ion binding"/>
    <property type="evidence" value="ECO:0000250"/>
    <property type="project" value="UniProtKB"/>
</dbReference>
<dbReference type="GO" id="GO:0009734">
    <property type="term" value="P:auxin-activated signaling pathway"/>
    <property type="evidence" value="ECO:0007669"/>
    <property type="project" value="UniProtKB-KW"/>
</dbReference>
<dbReference type="GO" id="GO:0000911">
    <property type="term" value="P:cytokinesis by cell plate formation"/>
    <property type="evidence" value="ECO:0000318"/>
    <property type="project" value="GO_Central"/>
</dbReference>
<dbReference type="GO" id="GO:0051781">
    <property type="term" value="P:positive regulation of cell division"/>
    <property type="evidence" value="ECO:0000318"/>
    <property type="project" value="GO_Central"/>
</dbReference>
<dbReference type="GO" id="GO:0045793">
    <property type="term" value="P:positive regulation of cell size"/>
    <property type="evidence" value="ECO:0000318"/>
    <property type="project" value="GO_Central"/>
</dbReference>
<dbReference type="GO" id="GO:0032877">
    <property type="term" value="P:positive regulation of DNA endoreduplication"/>
    <property type="evidence" value="ECO:0000318"/>
    <property type="project" value="GO_Central"/>
</dbReference>
<dbReference type="GO" id="GO:0009826">
    <property type="term" value="P:unidimensional cell growth"/>
    <property type="evidence" value="ECO:0000318"/>
    <property type="project" value="GO_Central"/>
</dbReference>
<dbReference type="CDD" id="cd02220">
    <property type="entry name" value="cupin_ABP1"/>
    <property type="match status" value="1"/>
</dbReference>
<dbReference type="FunFam" id="2.60.120.10:FF:000080">
    <property type="entry name" value="Auxin-binding protein 1"/>
    <property type="match status" value="1"/>
</dbReference>
<dbReference type="Gene3D" id="2.60.120.10">
    <property type="entry name" value="Jelly Rolls"/>
    <property type="match status" value="1"/>
</dbReference>
<dbReference type="InterPro" id="IPR000526">
    <property type="entry name" value="Auxin-bd"/>
</dbReference>
<dbReference type="InterPro" id="IPR014710">
    <property type="entry name" value="RmlC-like_jellyroll"/>
</dbReference>
<dbReference type="InterPro" id="IPR011051">
    <property type="entry name" value="RmlC_Cupin_sf"/>
</dbReference>
<dbReference type="PANTHER" id="PTHR37236">
    <property type="entry name" value="AUXIN-BINDING PROTEIN 1"/>
    <property type="match status" value="1"/>
</dbReference>
<dbReference type="PANTHER" id="PTHR37236:SF1">
    <property type="entry name" value="AUXIN-BINDING PROTEIN 1"/>
    <property type="match status" value="1"/>
</dbReference>
<dbReference type="Pfam" id="PF02041">
    <property type="entry name" value="Auxin_BP"/>
    <property type="match status" value="1"/>
</dbReference>
<dbReference type="PRINTS" id="PR00655">
    <property type="entry name" value="AUXINBINDNGP"/>
</dbReference>
<dbReference type="SUPFAM" id="SSF51182">
    <property type="entry name" value="RmlC-like cupins"/>
    <property type="match status" value="1"/>
</dbReference>
<dbReference type="PROSITE" id="PS00014">
    <property type="entry name" value="ER_TARGET"/>
    <property type="match status" value="1"/>
</dbReference>
<reference key="1">
    <citation type="journal article" date="1993" name="Plant Mol. Biol.">
        <title>Two members of the ERabp gene family are expressed differentially in reproductive organs but to similar levels in the coleoptile of maize.</title>
        <authorList>
            <person name="Hesse T."/>
            <person name="Garbers C."/>
            <person name="Brzobohaty B."/>
            <person name="Kreimer G."/>
            <person name="Soell D."/>
            <person name="Melkonian M."/>
            <person name="Schell J."/>
            <person name="Palme K."/>
        </authorList>
    </citation>
    <scope>NUCLEOTIDE SEQUENCE [MRNA]</scope>
</reference>
<reference key="2">
    <citation type="journal article" date="1993" name="Plant J.">
        <title>Molecular analysis of three maize 22 kDa auxin-binding protein genes -- transient promoter expression and regulatory regions.</title>
        <authorList>
            <person name="Schwob E."/>
            <person name="Choi S.-Y."/>
            <person name="Simmons C."/>
            <person name="Migliaccio F."/>
            <person name="Ilag L."/>
            <person name="Hesse T."/>
            <person name="Palme K."/>
            <person name="Soell D."/>
        </authorList>
    </citation>
    <scope>NUCLEOTIDE SEQUENCE [GENOMIC DNA]</scope>
    <source>
        <strain>cv. Wisconsin 22</strain>
    </source>
</reference>
<proteinExistence type="evidence at transcript level"/>